<reference key="1">
    <citation type="journal article" date="2005" name="Proc. Natl. Acad. Sci. U.S.A.">
        <title>Complete genome sequence of Vibrio fischeri: a symbiotic bacterium with pathogenic congeners.</title>
        <authorList>
            <person name="Ruby E.G."/>
            <person name="Urbanowski M."/>
            <person name="Campbell J."/>
            <person name="Dunn A."/>
            <person name="Faini M."/>
            <person name="Gunsalus R."/>
            <person name="Lostroh P."/>
            <person name="Lupp C."/>
            <person name="McCann J."/>
            <person name="Millikan D."/>
            <person name="Schaefer A."/>
            <person name="Stabb E."/>
            <person name="Stevens A."/>
            <person name="Visick K."/>
            <person name="Whistler C."/>
            <person name="Greenberg E.P."/>
        </authorList>
    </citation>
    <scope>NUCLEOTIDE SEQUENCE [LARGE SCALE GENOMIC DNA]</scope>
    <source>
        <strain>ATCC 700601 / ES114</strain>
    </source>
</reference>
<evidence type="ECO:0000255" key="1">
    <source>
        <dbReference type="HAMAP-Rule" id="MF_01342"/>
    </source>
</evidence>
<evidence type="ECO:0000305" key="2"/>
<comment type="function">
    <text evidence="1">Binds 23S rRNA and is also seen to make contacts with the A and possibly P site tRNAs.</text>
</comment>
<comment type="subunit">
    <text evidence="1">Part of the 50S ribosomal subunit.</text>
</comment>
<comment type="similarity">
    <text evidence="1">Belongs to the universal ribosomal protein uL16 family.</text>
</comment>
<accession>Q5E8A8</accession>
<gene>
    <name evidence="1" type="primary">rplP</name>
    <name type="ordered locus">VF_0243</name>
</gene>
<organism>
    <name type="scientific">Aliivibrio fischeri (strain ATCC 700601 / ES114)</name>
    <name type="common">Vibrio fischeri</name>
    <dbReference type="NCBI Taxonomy" id="312309"/>
    <lineage>
        <taxon>Bacteria</taxon>
        <taxon>Pseudomonadati</taxon>
        <taxon>Pseudomonadota</taxon>
        <taxon>Gammaproteobacteria</taxon>
        <taxon>Vibrionales</taxon>
        <taxon>Vibrionaceae</taxon>
        <taxon>Aliivibrio</taxon>
    </lineage>
</organism>
<feature type="chain" id="PRO_0000062245" description="Large ribosomal subunit protein uL16">
    <location>
        <begin position="1"/>
        <end position="136"/>
    </location>
</feature>
<keyword id="KW-1185">Reference proteome</keyword>
<keyword id="KW-0687">Ribonucleoprotein</keyword>
<keyword id="KW-0689">Ribosomal protein</keyword>
<keyword id="KW-0694">RNA-binding</keyword>
<keyword id="KW-0699">rRNA-binding</keyword>
<keyword id="KW-0820">tRNA-binding</keyword>
<protein>
    <recommendedName>
        <fullName evidence="1">Large ribosomal subunit protein uL16</fullName>
    </recommendedName>
    <alternativeName>
        <fullName evidence="2">50S ribosomal protein L16</fullName>
    </alternativeName>
</protein>
<name>RL16_ALIF1</name>
<proteinExistence type="inferred from homology"/>
<dbReference type="EMBL" id="CP000020">
    <property type="protein sequence ID" value="AAW84738.1"/>
    <property type="molecule type" value="Genomic_DNA"/>
</dbReference>
<dbReference type="RefSeq" id="WP_005417237.1">
    <property type="nucleotide sequence ID" value="NZ_CAWLES010000001.1"/>
</dbReference>
<dbReference type="RefSeq" id="YP_203626.1">
    <property type="nucleotide sequence ID" value="NC_006840.2"/>
</dbReference>
<dbReference type="SMR" id="Q5E8A8"/>
<dbReference type="STRING" id="312309.VF_0243"/>
<dbReference type="EnsemblBacteria" id="AAW84738">
    <property type="protein sequence ID" value="AAW84738"/>
    <property type="gene ID" value="VF_0243"/>
</dbReference>
<dbReference type="GeneID" id="56276448"/>
<dbReference type="KEGG" id="vfi:VF_0243"/>
<dbReference type="PATRIC" id="fig|312309.11.peg.239"/>
<dbReference type="eggNOG" id="COG0197">
    <property type="taxonomic scope" value="Bacteria"/>
</dbReference>
<dbReference type="HOGENOM" id="CLU_078858_2_1_6"/>
<dbReference type="OrthoDB" id="9802589at2"/>
<dbReference type="Proteomes" id="UP000000537">
    <property type="component" value="Chromosome I"/>
</dbReference>
<dbReference type="GO" id="GO:0022625">
    <property type="term" value="C:cytosolic large ribosomal subunit"/>
    <property type="evidence" value="ECO:0007669"/>
    <property type="project" value="TreeGrafter"/>
</dbReference>
<dbReference type="GO" id="GO:0019843">
    <property type="term" value="F:rRNA binding"/>
    <property type="evidence" value="ECO:0007669"/>
    <property type="project" value="UniProtKB-UniRule"/>
</dbReference>
<dbReference type="GO" id="GO:0003735">
    <property type="term" value="F:structural constituent of ribosome"/>
    <property type="evidence" value="ECO:0007669"/>
    <property type="project" value="InterPro"/>
</dbReference>
<dbReference type="GO" id="GO:0000049">
    <property type="term" value="F:tRNA binding"/>
    <property type="evidence" value="ECO:0007669"/>
    <property type="project" value="UniProtKB-KW"/>
</dbReference>
<dbReference type="GO" id="GO:0006412">
    <property type="term" value="P:translation"/>
    <property type="evidence" value="ECO:0007669"/>
    <property type="project" value="UniProtKB-UniRule"/>
</dbReference>
<dbReference type="CDD" id="cd01433">
    <property type="entry name" value="Ribosomal_L16_L10e"/>
    <property type="match status" value="1"/>
</dbReference>
<dbReference type="FunFam" id="3.90.1170.10:FF:000001">
    <property type="entry name" value="50S ribosomal protein L16"/>
    <property type="match status" value="1"/>
</dbReference>
<dbReference type="Gene3D" id="3.90.1170.10">
    <property type="entry name" value="Ribosomal protein L10e/L16"/>
    <property type="match status" value="1"/>
</dbReference>
<dbReference type="HAMAP" id="MF_01342">
    <property type="entry name" value="Ribosomal_uL16"/>
    <property type="match status" value="1"/>
</dbReference>
<dbReference type="InterPro" id="IPR047873">
    <property type="entry name" value="Ribosomal_uL16"/>
</dbReference>
<dbReference type="InterPro" id="IPR000114">
    <property type="entry name" value="Ribosomal_uL16_bact-type"/>
</dbReference>
<dbReference type="InterPro" id="IPR020798">
    <property type="entry name" value="Ribosomal_uL16_CS"/>
</dbReference>
<dbReference type="InterPro" id="IPR016180">
    <property type="entry name" value="Ribosomal_uL16_dom"/>
</dbReference>
<dbReference type="InterPro" id="IPR036920">
    <property type="entry name" value="Ribosomal_uL16_sf"/>
</dbReference>
<dbReference type="NCBIfam" id="TIGR01164">
    <property type="entry name" value="rplP_bact"/>
    <property type="match status" value="1"/>
</dbReference>
<dbReference type="PANTHER" id="PTHR12220">
    <property type="entry name" value="50S/60S RIBOSOMAL PROTEIN L16"/>
    <property type="match status" value="1"/>
</dbReference>
<dbReference type="PANTHER" id="PTHR12220:SF13">
    <property type="entry name" value="LARGE RIBOSOMAL SUBUNIT PROTEIN UL16M"/>
    <property type="match status" value="1"/>
</dbReference>
<dbReference type="Pfam" id="PF00252">
    <property type="entry name" value="Ribosomal_L16"/>
    <property type="match status" value="1"/>
</dbReference>
<dbReference type="PRINTS" id="PR00060">
    <property type="entry name" value="RIBOSOMALL16"/>
</dbReference>
<dbReference type="SUPFAM" id="SSF54686">
    <property type="entry name" value="Ribosomal protein L16p/L10e"/>
    <property type="match status" value="1"/>
</dbReference>
<dbReference type="PROSITE" id="PS00586">
    <property type="entry name" value="RIBOSOMAL_L16_1"/>
    <property type="match status" value="1"/>
</dbReference>
<sequence>MLQPKRTKFRKVMTGRNRGLAKGTEVSFGDFGLKAVGRGRLTARQIEAARRAMTRHIKRQGQIWIRVFPDKPITEKPLEVRQGKGKGNVEYWVAQIQPGKVMYEMNGVPEELAREAFRLAARKLPIKTTFVTKQVM</sequence>